<sequence>MQVGVFIPIGNNGWLISETSPQYMPSFELNKEITQKAEKYGFDFALSMIKLRGFGGKTEFWEHNLESFTLMAGLAAVTSKIKIFATVATLTIPPAIVARMASTIDSIAPGRFGVNLVTGWQKAEYSQMGLWPGEAHYTDRYNYLAEYTTVLKDLLETGVSDFKGKYFTMDDCRVSPHPKETKLICAGSSDEGLAFTAQYADYSFALGKGTNTPTAFASVNRRLEAAAAKTGRDVQSFILFMVIADETDEKAMAKWQKYRDGADQEALAWLTQQAAPNAKAGATTNTQQLAAPESAVNLNMGTLVGSYESIARMMDEIAQVPGTAGVLLTFDDFVQGVEDFGTKIQPLMKSRKGG</sequence>
<feature type="chain" id="PRO_0000402586" description="Pyrimidine monooxygenase RutA">
    <location>
        <begin position="1"/>
        <end position="354"/>
    </location>
</feature>
<feature type="binding site" evidence="1">
    <location>
        <begin position="49"/>
        <end position="50"/>
    </location>
    <ligand>
        <name>FMN</name>
        <dbReference type="ChEBI" id="CHEBI:58210"/>
    </ligand>
</feature>
<feature type="binding site" evidence="1">
    <location>
        <position position="115"/>
    </location>
    <ligand>
        <name>FMN</name>
        <dbReference type="ChEBI" id="CHEBI:58210"/>
    </ligand>
</feature>
<feature type="binding site" evidence="1">
    <location>
        <position position="124"/>
    </location>
    <ligand>
        <name>FMN</name>
        <dbReference type="ChEBI" id="CHEBI:58210"/>
    </ligand>
</feature>
<feature type="binding site" evidence="1">
    <location>
        <begin position="140"/>
        <end position="141"/>
    </location>
    <ligand>
        <name>FMN</name>
        <dbReference type="ChEBI" id="CHEBI:58210"/>
    </ligand>
</feature>
<feature type="binding site" evidence="1">
    <location>
        <position position="189"/>
    </location>
    <ligand>
        <name>FMN</name>
        <dbReference type="ChEBI" id="CHEBI:58210"/>
    </ligand>
</feature>
<comment type="function">
    <text evidence="1">Catalyzes the pyrimidine ring opening between N-3 and C-4 by an unusual flavin hydroperoxide-catalyzed mechanism, adding oxygen atoms in the process to yield ureidoacrylate peracid, that immediately reacts with FMN forming ureidoacrylate and FMN-N(5)-oxide. The FMN-N(5)-oxide reacts spontaneously with NADH to produce FMN. Requires the flavin reductase RutF to regenerate FMN in vivo.</text>
</comment>
<comment type="catalytic activity">
    <reaction evidence="1">
        <text>uracil + FMNH2 + NADH + O2 = (Z)-3-ureidoacrylate + FMN + NAD(+) + H2O + H(+)</text>
        <dbReference type="Rhea" id="RHEA:31587"/>
        <dbReference type="ChEBI" id="CHEBI:15377"/>
        <dbReference type="ChEBI" id="CHEBI:15378"/>
        <dbReference type="ChEBI" id="CHEBI:15379"/>
        <dbReference type="ChEBI" id="CHEBI:17568"/>
        <dbReference type="ChEBI" id="CHEBI:57540"/>
        <dbReference type="ChEBI" id="CHEBI:57618"/>
        <dbReference type="ChEBI" id="CHEBI:57945"/>
        <dbReference type="ChEBI" id="CHEBI:58210"/>
        <dbReference type="ChEBI" id="CHEBI:59891"/>
        <dbReference type="EC" id="1.14.99.46"/>
    </reaction>
</comment>
<comment type="catalytic activity">
    <reaction evidence="1">
        <text>thymine + FMNH2 + NADH + O2 = (Z)-2-methylureidoacrylate + FMN + NAD(+) + H2O + H(+)</text>
        <dbReference type="Rhea" id="RHEA:31599"/>
        <dbReference type="ChEBI" id="CHEBI:15377"/>
        <dbReference type="ChEBI" id="CHEBI:15378"/>
        <dbReference type="ChEBI" id="CHEBI:15379"/>
        <dbReference type="ChEBI" id="CHEBI:17821"/>
        <dbReference type="ChEBI" id="CHEBI:57540"/>
        <dbReference type="ChEBI" id="CHEBI:57618"/>
        <dbReference type="ChEBI" id="CHEBI:57945"/>
        <dbReference type="ChEBI" id="CHEBI:58210"/>
        <dbReference type="ChEBI" id="CHEBI:143783"/>
        <dbReference type="EC" id="1.14.99.46"/>
    </reaction>
</comment>
<comment type="similarity">
    <text evidence="1">Belongs to the NtaA/SnaA/DszA monooxygenase family. RutA subfamily.</text>
</comment>
<accession>B8H1Q4</accession>
<keyword id="KW-0285">Flavoprotein</keyword>
<keyword id="KW-0288">FMN</keyword>
<keyword id="KW-0503">Monooxygenase</keyword>
<keyword id="KW-0521">NADP</keyword>
<keyword id="KW-0560">Oxidoreductase</keyword>
<keyword id="KW-1185">Reference proteome</keyword>
<dbReference type="EC" id="1.14.99.46" evidence="1"/>
<dbReference type="EMBL" id="CP001340">
    <property type="protein sequence ID" value="ACL96353.1"/>
    <property type="molecule type" value="Genomic_DNA"/>
</dbReference>
<dbReference type="RefSeq" id="WP_010920639.1">
    <property type="nucleotide sequence ID" value="NC_011916.1"/>
</dbReference>
<dbReference type="RefSeq" id="YP_002518261.1">
    <property type="nucleotide sequence ID" value="NC_011916.1"/>
</dbReference>
<dbReference type="SMR" id="B8H1Q4"/>
<dbReference type="GeneID" id="7331318"/>
<dbReference type="KEGG" id="ccs:CCNA_02888"/>
<dbReference type="PATRIC" id="fig|565050.3.peg.2818"/>
<dbReference type="HOGENOM" id="CLU_027853_1_1_5"/>
<dbReference type="OrthoDB" id="9814695at2"/>
<dbReference type="PhylomeDB" id="B8H1Q4"/>
<dbReference type="Proteomes" id="UP000001364">
    <property type="component" value="Chromosome"/>
</dbReference>
<dbReference type="GO" id="GO:0008726">
    <property type="term" value="F:alkanesulfonate monooxygenase activity"/>
    <property type="evidence" value="ECO:0007669"/>
    <property type="project" value="TreeGrafter"/>
</dbReference>
<dbReference type="GO" id="GO:0052614">
    <property type="term" value="F:uracil oxygenase activity"/>
    <property type="evidence" value="ECO:0007669"/>
    <property type="project" value="UniProtKB-EC"/>
</dbReference>
<dbReference type="GO" id="GO:0046306">
    <property type="term" value="P:alkanesulfonate catabolic process"/>
    <property type="evidence" value="ECO:0007669"/>
    <property type="project" value="TreeGrafter"/>
</dbReference>
<dbReference type="GO" id="GO:0019740">
    <property type="term" value="P:nitrogen utilization"/>
    <property type="evidence" value="ECO:0007669"/>
    <property type="project" value="UniProtKB-UniRule"/>
</dbReference>
<dbReference type="GO" id="GO:0006212">
    <property type="term" value="P:uracil catabolic process"/>
    <property type="evidence" value="ECO:0007669"/>
    <property type="project" value="UniProtKB-UniRule"/>
</dbReference>
<dbReference type="CDD" id="cd01094">
    <property type="entry name" value="Alkanesulfonate_monoxygenase"/>
    <property type="match status" value="1"/>
</dbReference>
<dbReference type="FunFam" id="3.20.20.30:FF:000003">
    <property type="entry name" value="Pyrimidine monooxygenase RutA"/>
    <property type="match status" value="1"/>
</dbReference>
<dbReference type="Gene3D" id="3.20.20.30">
    <property type="entry name" value="Luciferase-like domain"/>
    <property type="match status" value="1"/>
</dbReference>
<dbReference type="HAMAP" id="MF_01699">
    <property type="entry name" value="RutA"/>
    <property type="match status" value="1"/>
</dbReference>
<dbReference type="InterPro" id="IPR011251">
    <property type="entry name" value="Luciferase-like_dom"/>
</dbReference>
<dbReference type="InterPro" id="IPR036661">
    <property type="entry name" value="Luciferase-like_sf"/>
</dbReference>
<dbReference type="InterPro" id="IPR019914">
    <property type="entry name" value="Pyrimidine_monooxygenase_RutA"/>
</dbReference>
<dbReference type="InterPro" id="IPR050172">
    <property type="entry name" value="SsuD_RutA_monooxygenase"/>
</dbReference>
<dbReference type="NCBIfam" id="TIGR03612">
    <property type="entry name" value="RutA"/>
    <property type="match status" value="1"/>
</dbReference>
<dbReference type="PANTHER" id="PTHR42847">
    <property type="entry name" value="ALKANESULFONATE MONOOXYGENASE"/>
    <property type="match status" value="1"/>
</dbReference>
<dbReference type="PANTHER" id="PTHR42847:SF4">
    <property type="entry name" value="ALKANESULFONATE MONOOXYGENASE-RELATED"/>
    <property type="match status" value="1"/>
</dbReference>
<dbReference type="Pfam" id="PF00296">
    <property type="entry name" value="Bac_luciferase"/>
    <property type="match status" value="1"/>
</dbReference>
<dbReference type="SUPFAM" id="SSF51679">
    <property type="entry name" value="Bacterial luciferase-like"/>
    <property type="match status" value="1"/>
</dbReference>
<evidence type="ECO:0000255" key="1">
    <source>
        <dbReference type="HAMAP-Rule" id="MF_01699"/>
    </source>
</evidence>
<proteinExistence type="inferred from homology"/>
<protein>
    <recommendedName>
        <fullName evidence="1">Pyrimidine monooxygenase RutA</fullName>
        <ecNumber evidence="1">1.14.99.46</ecNumber>
    </recommendedName>
</protein>
<reference key="1">
    <citation type="journal article" date="2010" name="J. Bacteriol.">
        <title>The genetic basis of laboratory adaptation in Caulobacter crescentus.</title>
        <authorList>
            <person name="Marks M.E."/>
            <person name="Castro-Rojas C.M."/>
            <person name="Teiling C."/>
            <person name="Du L."/>
            <person name="Kapatral V."/>
            <person name="Walunas T.L."/>
            <person name="Crosson S."/>
        </authorList>
    </citation>
    <scope>NUCLEOTIDE SEQUENCE [LARGE SCALE GENOMIC DNA]</scope>
    <source>
        <strain>NA1000 / CB15N</strain>
    </source>
</reference>
<gene>
    <name evidence="1" type="primary">rutA</name>
    <name type="ordered locus">CCNA_02888</name>
</gene>
<organism>
    <name type="scientific">Caulobacter vibrioides (strain NA1000 / CB15N)</name>
    <name type="common">Caulobacter crescentus</name>
    <dbReference type="NCBI Taxonomy" id="565050"/>
    <lineage>
        <taxon>Bacteria</taxon>
        <taxon>Pseudomonadati</taxon>
        <taxon>Pseudomonadota</taxon>
        <taxon>Alphaproteobacteria</taxon>
        <taxon>Caulobacterales</taxon>
        <taxon>Caulobacteraceae</taxon>
        <taxon>Caulobacter</taxon>
    </lineage>
</organism>
<name>RUTA_CAUVN</name>